<feature type="chain" id="PRO_0000455219" description="Cytidylate cyclase">
    <location>
        <begin position="1"/>
        <end position="463"/>
    </location>
</feature>
<feature type="domain" description="Guanylate cyclase" evidence="4">
    <location>
        <begin position="122"/>
        <end position="231"/>
    </location>
</feature>
<feature type="region of interest" description="AGS-C domain" evidence="8">
    <location>
        <begin position="334"/>
        <end position="454"/>
    </location>
</feature>
<feature type="binding site" evidence="3 8">
    <location>
        <position position="125"/>
    </location>
    <ligand>
        <name>a ribonucleoside 5'-triphosphate</name>
        <dbReference type="ChEBI" id="CHEBI:61557"/>
    </ligand>
</feature>
<feature type="binding site" evidence="8">
    <location>
        <position position="127"/>
    </location>
    <ligand>
        <name>Mn(2+)</name>
        <dbReference type="ChEBI" id="CHEBI:29035"/>
        <label>1</label>
    </ligand>
</feature>
<feature type="binding site" evidence="8">
    <location>
        <position position="127"/>
    </location>
    <ligand>
        <name>Mn(2+)</name>
        <dbReference type="ChEBI" id="CHEBI:29035"/>
        <label>2</label>
    </ligand>
</feature>
<feature type="binding site" evidence="8">
    <location>
        <position position="128"/>
    </location>
    <ligand>
        <name>Mn(2+)</name>
        <dbReference type="ChEBI" id="CHEBI:29035"/>
        <label>2</label>
    </ligand>
</feature>
<feature type="binding site" evidence="8">
    <location>
        <position position="171"/>
    </location>
    <ligand>
        <name>Mn(2+)</name>
        <dbReference type="ChEBI" id="CHEBI:29035"/>
        <label>1</label>
    </ligand>
</feature>
<feature type="binding site" evidence="8">
    <location>
        <position position="171"/>
    </location>
    <ligand>
        <name>Mn(2+)</name>
        <dbReference type="ChEBI" id="CHEBI:29035"/>
        <label>2</label>
    </ligand>
</feature>
<evidence type="ECO:0000250" key="1">
    <source>
        <dbReference type="UniProtKB" id="A0A0J5ZXG5"/>
    </source>
</evidence>
<evidence type="ECO:0000250" key="2">
    <source>
        <dbReference type="UniProtKB" id="P0DV24"/>
    </source>
</evidence>
<evidence type="ECO:0000250" key="3">
    <source>
        <dbReference type="UniProtKB" id="P0DV40"/>
    </source>
</evidence>
<evidence type="ECO:0000255" key="4">
    <source>
        <dbReference type="PROSITE-ProRule" id="PRU00099"/>
    </source>
</evidence>
<evidence type="ECO:0000269" key="5">
    <source>
    </source>
</evidence>
<evidence type="ECO:0000303" key="6">
    <source>
    </source>
</evidence>
<evidence type="ECO:0000305" key="7"/>
<evidence type="ECO:0000305" key="8">
    <source>
    </source>
</evidence>
<proteinExistence type="evidence at protein level"/>
<accession>P0DV26</accession>
<keyword id="KW-0051">Antiviral defense</keyword>
<keyword id="KW-0963">Cytoplasm</keyword>
<keyword id="KW-0456">Lyase</keyword>
<keyword id="KW-0464">Manganese</keyword>
<keyword id="KW-0479">Metal-binding</keyword>
<keyword id="KW-0547">Nucleotide-binding</keyword>
<name>PYCC2_ECOLX</name>
<organism>
    <name type="scientific">Escherichia coli</name>
    <dbReference type="NCBI Taxonomy" id="562"/>
    <lineage>
        <taxon>Bacteria</taxon>
        <taxon>Pseudomonadati</taxon>
        <taxon>Pseudomonadota</taxon>
        <taxon>Gammaproteobacteria</taxon>
        <taxon>Enterobacterales</taxon>
        <taxon>Enterobacteriaceae</taxon>
        <taxon>Escherichia</taxon>
    </lineage>
</organism>
<comment type="function">
    <text evidence="5">Pycsar (pyrimidine cyclase system for antiphage resistance) provides immunity against bacteriophage. The pyrimidine cyclase (PycC) synthesizes cyclic nucleotides in response to infection; these serve as specific second messenger signals. The signal activates the adjacent effector, leading to bacterial cell death and abortive phage infection. A clade E Pycsar system.</text>
</comment>
<comment type="function">
    <text evidence="5">The pyrimidine cyclase gene of a two-gene Pycsar system, generates cyclic CMP (cCMP) from CTP in response to bacteriophage infection. Has little to no activity on ATP, GTP or UTP (PubMed:34644530). Expression of this and adjacent effector Ec303145PycTM (AC P0DV27) confers resistance to bacteriophage P1, T5, lambda-vir and phi27 (PubMed:34644530).</text>
</comment>
<comment type="catalytic activity">
    <reaction evidence="5">
        <text>CTP = 3',5'-cyclic CMP + diphosphate</text>
        <dbReference type="Rhea" id="RHEA:14737"/>
        <dbReference type="ChEBI" id="CHEBI:33019"/>
        <dbReference type="ChEBI" id="CHEBI:37563"/>
        <dbReference type="ChEBI" id="CHEBI:58003"/>
        <dbReference type="EC" id="4.6.1.6"/>
    </reaction>
</comment>
<comment type="cofactor">
    <cofactor evidence="2">
        <name>Mn(2+)</name>
        <dbReference type="ChEBI" id="CHEBI:29035"/>
    </cofactor>
</comment>
<comment type="subunit">
    <text evidence="1">Homodimer.</text>
</comment>
<comment type="subcellular location">
    <subcellularLocation>
        <location evidence="7">Cytoplasm</location>
    </subcellularLocation>
</comment>
<comment type="domain">
    <text evidence="8">Has an N-terminal nucleotide cyclase domain and a C-terminal nucleotide sensor domain (AGS-C).</text>
</comment>
<comment type="similarity">
    <text evidence="8">Belongs to the adenylyl cyclase class-4/guanylyl cyclase family. Pyrimidine cyclase subfamily.</text>
</comment>
<reference key="1">
    <citation type="submission" date="2014-02" db="EMBL/GenBank/DDBJ databases">
        <title>Emergence of novel diverse phylogenomic lineages of EPEC.</title>
        <authorList>
            <person name="Hazen T.H."/>
            <person name="Donnenberg M."/>
            <person name="Nataro J."/>
            <person name="Kaper J."/>
            <person name="Rasko D."/>
        </authorList>
    </citation>
    <scope>NUCLEOTIDE SEQUENCE [LARGE SCALE GENOMIC DNA]</scope>
    <source>
        <strain>303145</strain>
    </source>
</reference>
<reference key="2">
    <citation type="journal article" date="2021" name="Cell">
        <title>Cyclic CMP and cyclic UMP mediate bacterial immunity against phages.</title>
        <authorList>
            <person name="Tal N."/>
            <person name="Morehouse B.R."/>
            <person name="Millman A."/>
            <person name="Stokar-Avihail A."/>
            <person name="Avraham C."/>
            <person name="Fedorenko T."/>
            <person name="Yirmiya E."/>
            <person name="Herbst E."/>
            <person name="Brandis A."/>
            <person name="Mehlman T."/>
            <person name="Oppenheimer-Shaanan Y."/>
            <person name="Keszei A.F.A."/>
            <person name="Shao S."/>
            <person name="Amitai G."/>
            <person name="Kranzusch P.J."/>
            <person name="Sorek R."/>
        </authorList>
    </citation>
    <scope>FUNCTION</scope>
    <scope>CATALYTIC ACTIVITY</scope>
    <scope>ANTIVIRAL DEFENSE</scope>
    <scope>CLASSIFICATION</scope>
    <source>
        <strain>303145</strain>
    </source>
</reference>
<protein>
    <recommendedName>
        <fullName evidence="6">Cytidylate cyclase</fullName>
        <ecNumber evidence="5">4.6.1.6</ecNumber>
    </recommendedName>
    <alternativeName>
        <fullName>Cyclic CMP synthase</fullName>
        <shortName evidence="6">cCMP synthase</shortName>
    </alternativeName>
    <alternativeName>
        <fullName evidence="6">Ec303145PycC</fullName>
    </alternativeName>
</protein>
<gene>
    <name evidence="6" type="primary">pycC</name>
    <name type="ORF">Ga0100619_101298</name>
</gene>
<sequence length="463" mass="52991">MSIKNLYKNLNDEMGSISKRRKNNNISFNKSTFDSHAMDALNTSFENYEDISLEGFESYINESASRTVIERNSLVPLKDYDAVHSLRNAFGKPPRDNEPRIGTHPEFKHLELDNRTDTGYVVTMFMDIIGSTKLGLSYSPSDVFLFKNNIITGAIETINAFDGHVHRIMGDAVMAFFRSRQNEQHDTLENSVIDAINCAAYFIEVMNEIVKPQIKEVADENIGIRIGIDLGETNYVLWGNYGIPGVNEVTATSFFVDIASKLQHKAPKNSIMLGQNLVEKLGLTVNDYLTYKLKDGQPDRYIIDFTSKNQSRLRYKQYLLNQSKYFSILPHGLKPSRIKVVISYSNDELGLVNRKDYFNCSSVIPKGKWVKFHATFCEEYGEHYESLKFKFRVVNNGLDASKKDNYDNHETEIIKKAYEKENGVFTAIHKEQTSYKGLQHMYISVISNDTVIEREIPCSIFIK</sequence>
<dbReference type="EC" id="4.6.1.6" evidence="5"/>
<dbReference type="EMBL" id="JHSG01000012">
    <property type="status" value="NOT_ANNOTATED_CDS"/>
    <property type="molecule type" value="Genomic_DNA"/>
</dbReference>
<dbReference type="RefSeq" id="WP_052893573.1">
    <property type="nucleotide sequence ID" value="NZ_PQSC01000016.1"/>
</dbReference>
<dbReference type="SMR" id="P0DV26"/>
<dbReference type="GO" id="GO:0005737">
    <property type="term" value="C:cytoplasm"/>
    <property type="evidence" value="ECO:0007669"/>
    <property type="project" value="UniProtKB-SubCell"/>
</dbReference>
<dbReference type="GO" id="GO:0004016">
    <property type="term" value="F:adenylate cyclase activity"/>
    <property type="evidence" value="ECO:0007669"/>
    <property type="project" value="UniProtKB-ARBA"/>
</dbReference>
<dbReference type="GO" id="GO:0046872">
    <property type="term" value="F:metal ion binding"/>
    <property type="evidence" value="ECO:0007669"/>
    <property type="project" value="UniProtKB-KW"/>
</dbReference>
<dbReference type="GO" id="GO:0000166">
    <property type="term" value="F:nucleotide binding"/>
    <property type="evidence" value="ECO:0007669"/>
    <property type="project" value="UniProtKB-KW"/>
</dbReference>
<dbReference type="GO" id="GO:0009190">
    <property type="term" value="P:cyclic nucleotide biosynthetic process"/>
    <property type="evidence" value="ECO:0007669"/>
    <property type="project" value="InterPro"/>
</dbReference>
<dbReference type="GO" id="GO:0051607">
    <property type="term" value="P:defense response to virus"/>
    <property type="evidence" value="ECO:0007669"/>
    <property type="project" value="UniProtKB-KW"/>
</dbReference>
<dbReference type="GO" id="GO:0035556">
    <property type="term" value="P:intracellular signal transduction"/>
    <property type="evidence" value="ECO:0007669"/>
    <property type="project" value="InterPro"/>
</dbReference>
<dbReference type="CDD" id="cd07302">
    <property type="entry name" value="CHD"/>
    <property type="match status" value="1"/>
</dbReference>
<dbReference type="Gene3D" id="3.30.70.1230">
    <property type="entry name" value="Nucleotide cyclase"/>
    <property type="match status" value="1"/>
</dbReference>
<dbReference type="InterPro" id="IPR001054">
    <property type="entry name" value="A/G_cyclase"/>
</dbReference>
<dbReference type="InterPro" id="IPR040511">
    <property type="entry name" value="AGS_C"/>
</dbReference>
<dbReference type="InterPro" id="IPR029787">
    <property type="entry name" value="Nucleotide_cyclase"/>
</dbReference>
<dbReference type="Pfam" id="PF18134">
    <property type="entry name" value="AGS_C"/>
    <property type="match status" value="1"/>
</dbReference>
<dbReference type="Pfam" id="PF00211">
    <property type="entry name" value="Guanylate_cyc"/>
    <property type="match status" value="1"/>
</dbReference>
<dbReference type="SUPFAM" id="SSF55073">
    <property type="entry name" value="Nucleotide cyclase"/>
    <property type="match status" value="1"/>
</dbReference>
<dbReference type="PROSITE" id="PS50125">
    <property type="entry name" value="GUANYLATE_CYCLASE_2"/>
    <property type="match status" value="1"/>
</dbReference>